<reference key="1">
    <citation type="submission" date="2008-04" db="EMBL/GenBank/DDBJ databases">
        <title>Complete sequence of chromosome of Methylobacterium populi BJ001.</title>
        <authorList>
            <consortium name="US DOE Joint Genome Institute"/>
            <person name="Copeland A."/>
            <person name="Lucas S."/>
            <person name="Lapidus A."/>
            <person name="Glavina del Rio T."/>
            <person name="Dalin E."/>
            <person name="Tice H."/>
            <person name="Bruce D."/>
            <person name="Goodwin L."/>
            <person name="Pitluck S."/>
            <person name="Chertkov O."/>
            <person name="Brettin T."/>
            <person name="Detter J.C."/>
            <person name="Han C."/>
            <person name="Kuske C.R."/>
            <person name="Schmutz J."/>
            <person name="Larimer F."/>
            <person name="Land M."/>
            <person name="Hauser L."/>
            <person name="Kyrpides N."/>
            <person name="Mikhailova N."/>
            <person name="Marx C."/>
            <person name="Richardson P."/>
        </authorList>
    </citation>
    <scope>NUCLEOTIDE SEQUENCE [LARGE SCALE GENOMIC DNA]</scope>
    <source>
        <strain>ATCC BAA-705 / NCIMB 13946 / BJ001</strain>
    </source>
</reference>
<gene>
    <name evidence="1" type="primary">rplI</name>
    <name type="ordered locus">Mpop_4414</name>
</gene>
<protein>
    <recommendedName>
        <fullName evidence="1">Large ribosomal subunit protein bL9</fullName>
    </recommendedName>
    <alternativeName>
        <fullName evidence="2">50S ribosomal protein L9</fullName>
    </alternativeName>
</protein>
<organism>
    <name type="scientific">Methylorubrum populi (strain ATCC BAA-705 / NCIMB 13946 / BJ001)</name>
    <name type="common">Methylobacterium populi</name>
    <dbReference type="NCBI Taxonomy" id="441620"/>
    <lineage>
        <taxon>Bacteria</taxon>
        <taxon>Pseudomonadati</taxon>
        <taxon>Pseudomonadota</taxon>
        <taxon>Alphaproteobacteria</taxon>
        <taxon>Hyphomicrobiales</taxon>
        <taxon>Methylobacteriaceae</taxon>
        <taxon>Methylorubrum</taxon>
    </lineage>
</organism>
<feature type="chain" id="PRO_1000126938" description="Large ribosomal subunit protein bL9">
    <location>
        <begin position="1"/>
        <end position="190"/>
    </location>
</feature>
<dbReference type="EMBL" id="CP001029">
    <property type="protein sequence ID" value="ACB82514.1"/>
    <property type="molecule type" value="Genomic_DNA"/>
</dbReference>
<dbReference type="RefSeq" id="WP_012456121.1">
    <property type="nucleotide sequence ID" value="NC_010725.1"/>
</dbReference>
<dbReference type="SMR" id="B1ZFQ5"/>
<dbReference type="STRING" id="441620.Mpop_4414"/>
<dbReference type="KEGG" id="mpo:Mpop_4414"/>
<dbReference type="eggNOG" id="COG0359">
    <property type="taxonomic scope" value="Bacteria"/>
</dbReference>
<dbReference type="HOGENOM" id="CLU_078938_1_0_5"/>
<dbReference type="OrthoDB" id="9788336at2"/>
<dbReference type="Proteomes" id="UP000007136">
    <property type="component" value="Chromosome"/>
</dbReference>
<dbReference type="GO" id="GO:1990904">
    <property type="term" value="C:ribonucleoprotein complex"/>
    <property type="evidence" value="ECO:0007669"/>
    <property type="project" value="UniProtKB-KW"/>
</dbReference>
<dbReference type="GO" id="GO:0005840">
    <property type="term" value="C:ribosome"/>
    <property type="evidence" value="ECO:0007669"/>
    <property type="project" value="UniProtKB-KW"/>
</dbReference>
<dbReference type="GO" id="GO:0019843">
    <property type="term" value="F:rRNA binding"/>
    <property type="evidence" value="ECO:0007669"/>
    <property type="project" value="UniProtKB-UniRule"/>
</dbReference>
<dbReference type="GO" id="GO:0003735">
    <property type="term" value="F:structural constituent of ribosome"/>
    <property type="evidence" value="ECO:0007669"/>
    <property type="project" value="InterPro"/>
</dbReference>
<dbReference type="GO" id="GO:0006412">
    <property type="term" value="P:translation"/>
    <property type="evidence" value="ECO:0007669"/>
    <property type="project" value="UniProtKB-UniRule"/>
</dbReference>
<dbReference type="Gene3D" id="3.10.430.100">
    <property type="entry name" value="Ribosomal protein L9, C-terminal domain"/>
    <property type="match status" value="1"/>
</dbReference>
<dbReference type="Gene3D" id="3.40.5.10">
    <property type="entry name" value="Ribosomal protein L9, N-terminal domain"/>
    <property type="match status" value="1"/>
</dbReference>
<dbReference type="HAMAP" id="MF_00503">
    <property type="entry name" value="Ribosomal_bL9"/>
    <property type="match status" value="1"/>
</dbReference>
<dbReference type="InterPro" id="IPR000244">
    <property type="entry name" value="Ribosomal_bL9"/>
</dbReference>
<dbReference type="InterPro" id="IPR009027">
    <property type="entry name" value="Ribosomal_bL9/RNase_H1_N"/>
</dbReference>
<dbReference type="InterPro" id="IPR020594">
    <property type="entry name" value="Ribosomal_bL9_bac/chp"/>
</dbReference>
<dbReference type="InterPro" id="IPR020069">
    <property type="entry name" value="Ribosomal_bL9_C"/>
</dbReference>
<dbReference type="InterPro" id="IPR036791">
    <property type="entry name" value="Ribosomal_bL9_C_sf"/>
</dbReference>
<dbReference type="InterPro" id="IPR020070">
    <property type="entry name" value="Ribosomal_bL9_N"/>
</dbReference>
<dbReference type="InterPro" id="IPR036935">
    <property type="entry name" value="Ribosomal_bL9_N_sf"/>
</dbReference>
<dbReference type="NCBIfam" id="TIGR00158">
    <property type="entry name" value="L9"/>
    <property type="match status" value="1"/>
</dbReference>
<dbReference type="PANTHER" id="PTHR21368">
    <property type="entry name" value="50S RIBOSOMAL PROTEIN L9"/>
    <property type="match status" value="1"/>
</dbReference>
<dbReference type="Pfam" id="PF03948">
    <property type="entry name" value="Ribosomal_L9_C"/>
    <property type="match status" value="1"/>
</dbReference>
<dbReference type="Pfam" id="PF01281">
    <property type="entry name" value="Ribosomal_L9_N"/>
    <property type="match status" value="1"/>
</dbReference>
<dbReference type="SUPFAM" id="SSF55658">
    <property type="entry name" value="L9 N-domain-like"/>
    <property type="match status" value="1"/>
</dbReference>
<dbReference type="SUPFAM" id="SSF55653">
    <property type="entry name" value="Ribosomal protein L9 C-domain"/>
    <property type="match status" value="1"/>
</dbReference>
<dbReference type="PROSITE" id="PS00651">
    <property type="entry name" value="RIBOSOMAL_L9"/>
    <property type="match status" value="1"/>
</dbReference>
<sequence length="190" mass="20963">MEVILLERVAKLGQMGETVNVRPGYARNFLLARGKALRATENNKKHFEAQRAQLEARNLERRNEAQTVAEKLDGQSFVLIRQSGETGVLYGSVSTRDLAEVVTKEGFTVERGQFVLNQPIKTLGLHTVPVTLHPEVEVKVTVNIARSPEEAERQARGESVTEREQFNLDDLGLEVGQALADAGEGADDRG</sequence>
<comment type="function">
    <text evidence="1">Binds to the 23S rRNA.</text>
</comment>
<comment type="similarity">
    <text evidence="1">Belongs to the bacterial ribosomal protein bL9 family.</text>
</comment>
<name>RL9_METPB</name>
<evidence type="ECO:0000255" key="1">
    <source>
        <dbReference type="HAMAP-Rule" id="MF_00503"/>
    </source>
</evidence>
<evidence type="ECO:0000305" key="2"/>
<proteinExistence type="inferred from homology"/>
<accession>B1ZFQ5</accession>
<keyword id="KW-0687">Ribonucleoprotein</keyword>
<keyword id="KW-0689">Ribosomal protein</keyword>
<keyword id="KW-0694">RNA-binding</keyword>
<keyword id="KW-0699">rRNA-binding</keyword>